<sequence>MSINDDISSDVMRIRDADWNKRSGSKVPSPGDVTLSNGAVEIDATYLYADMANSSRMAKELDRRVTAKILKSFLASSSRLISHFGGTIMSFDGDRVMGAFMGDAKNSSAIKCSFSIAYSVTQLIRPKFESKYDTVKNAGFKIRHATGVDTGTVFVVRGGIYGSNELISIGRAPNLAAKLSDLREGEYTTFATKSVYDRTNKLQKQRLDGSSDIWEKRDWDFCDENITIYRSSYWRKPGSN</sequence>
<name>PYCC_RHOS2</name>
<gene>
    <name evidence="6" type="primary">pycC</name>
    <name evidence="7" type="ORF">B5V46_03430</name>
</gene>
<keyword id="KW-0051">Antiviral defense</keyword>
<keyword id="KW-0963">Cytoplasm</keyword>
<keyword id="KW-0456">Lyase</keyword>
<keyword id="KW-0464">Manganese</keyword>
<keyword id="KW-0479">Metal-binding</keyword>
<keyword id="KW-0547">Nucleotide-binding</keyword>
<accession>A0A1V0HUX5</accession>
<dbReference type="EC" id="4.6.1.26" evidence="5"/>
<dbReference type="EMBL" id="CP020384">
    <property type="protein sequence ID" value="ARC87741.1"/>
    <property type="molecule type" value="Genomic_DNA"/>
</dbReference>
<dbReference type="RefSeq" id="WP_080615289.1">
    <property type="nucleotide sequence ID" value="NZ_CP020384.1"/>
</dbReference>
<dbReference type="SMR" id="A0A1V0HUX5"/>
<dbReference type="STRING" id="308754.B5V46_03430"/>
<dbReference type="KEGG" id="rhm:B5V46_03430"/>
<dbReference type="OrthoDB" id="9807521at2"/>
<dbReference type="Proteomes" id="UP000191232">
    <property type="component" value="Chromosome"/>
</dbReference>
<dbReference type="GO" id="GO:0005737">
    <property type="term" value="C:cytoplasm"/>
    <property type="evidence" value="ECO:0007669"/>
    <property type="project" value="UniProtKB-SubCell"/>
</dbReference>
<dbReference type="GO" id="GO:0016829">
    <property type="term" value="F:lyase activity"/>
    <property type="evidence" value="ECO:0007669"/>
    <property type="project" value="UniProtKB-KW"/>
</dbReference>
<dbReference type="GO" id="GO:0046872">
    <property type="term" value="F:metal ion binding"/>
    <property type="evidence" value="ECO:0007669"/>
    <property type="project" value="UniProtKB-KW"/>
</dbReference>
<dbReference type="GO" id="GO:0000166">
    <property type="term" value="F:nucleotide binding"/>
    <property type="evidence" value="ECO:0007669"/>
    <property type="project" value="UniProtKB-KW"/>
</dbReference>
<dbReference type="GO" id="GO:0051607">
    <property type="term" value="P:defense response to virus"/>
    <property type="evidence" value="ECO:0007669"/>
    <property type="project" value="UniProtKB-KW"/>
</dbReference>
<dbReference type="Gene3D" id="3.30.70.1230">
    <property type="entry name" value="Nucleotide cyclase"/>
    <property type="match status" value="1"/>
</dbReference>
<dbReference type="InterPro" id="IPR029787">
    <property type="entry name" value="Nucleotide_cyclase"/>
</dbReference>
<dbReference type="SUPFAM" id="SSF55073">
    <property type="entry name" value="Nucleotide cyclase"/>
    <property type="match status" value="1"/>
</dbReference>
<reference key="1">
    <citation type="submission" date="2017-03" db="EMBL/GenBank/DDBJ databases">
        <title>Complete genome sequence of Rhodovulum sp. MB263.</title>
        <authorList>
            <person name="Nagao N."/>
            <person name="Yonekawa C."/>
            <person name="Hiraishi A."/>
            <person name="Kikuchi Y."/>
            <person name="Hirose Y."/>
        </authorList>
    </citation>
    <scope>NUCLEOTIDE SEQUENCE [LARGE SCALE GENOMIC DNA]</scope>
    <source>
        <strain>MB263</strain>
    </source>
</reference>
<reference key="2">
    <citation type="journal article" date="2021" name="Cell">
        <title>Cyclic CMP and cyclic UMP mediate bacterial immunity against phages.</title>
        <authorList>
            <person name="Tal N."/>
            <person name="Morehouse B.R."/>
            <person name="Millman A."/>
            <person name="Stokar-Avihail A."/>
            <person name="Avraham C."/>
            <person name="Fedorenko T."/>
            <person name="Yirmiya E."/>
            <person name="Herbst E."/>
            <person name="Brandis A."/>
            <person name="Mehlman T."/>
            <person name="Oppenheimer-Shaanan Y."/>
            <person name="Keszei A.F.A."/>
            <person name="Shao S."/>
            <person name="Amitai G."/>
            <person name="Kranzusch P.J."/>
            <person name="Sorek R."/>
        </authorList>
    </citation>
    <scope>FUNCTION</scope>
    <scope>CATALYTIC ACTIVITY</scope>
    <scope>CLASSIFICATION</scope>
    <source>
        <strain>MB263</strain>
    </source>
</reference>
<feature type="chain" id="PRO_0000455227" description="Uridylate cyclase">
    <location>
        <begin position="1"/>
        <end position="240"/>
    </location>
</feature>
<feature type="domain" description="Guanylate cyclase" evidence="4">
    <location>
        <begin position="45"/>
        <end position="180"/>
    </location>
</feature>
<feature type="binding site" evidence="3 9">
    <location>
        <position position="48"/>
    </location>
    <ligand>
        <name>a ribonucleoside 5'-triphosphate</name>
        <dbReference type="ChEBI" id="CHEBI:61557"/>
    </ligand>
</feature>
<feature type="binding site" evidence="9">
    <location>
        <position position="50"/>
    </location>
    <ligand>
        <name>Mn(2+)</name>
        <dbReference type="ChEBI" id="CHEBI:29035"/>
        <label>1</label>
    </ligand>
</feature>
<feature type="binding site" evidence="9">
    <location>
        <position position="50"/>
    </location>
    <ligand>
        <name>Mn(2+)</name>
        <dbReference type="ChEBI" id="CHEBI:29035"/>
        <label>2</label>
    </ligand>
</feature>
<feature type="binding site" evidence="9">
    <location>
        <position position="94"/>
    </location>
    <ligand>
        <name>Mn(2+)</name>
        <dbReference type="ChEBI" id="CHEBI:29035"/>
        <label>1</label>
    </ligand>
</feature>
<feature type="binding site" evidence="9">
    <location>
        <position position="94"/>
    </location>
    <ligand>
        <name>Mn(2+)</name>
        <dbReference type="ChEBI" id="CHEBI:29035"/>
        <label>2</label>
    </ligand>
</feature>
<feature type="binding site" evidence="3 9">
    <location>
        <position position="95"/>
    </location>
    <ligand>
        <name>a ribonucleoside 5'-triphosphate</name>
        <dbReference type="ChEBI" id="CHEBI:61557"/>
    </ligand>
</feature>
<proteinExistence type="evidence at protein level"/>
<organism>
    <name type="scientific">Rhodovulum sp. (strain MB263)</name>
    <dbReference type="NCBI Taxonomy" id="308754"/>
    <lineage>
        <taxon>Bacteria</taxon>
        <taxon>Pseudomonadati</taxon>
        <taxon>Pseudomonadota</taxon>
        <taxon>Alphaproteobacteria</taxon>
        <taxon>Rhodobacterales</taxon>
        <taxon>Paracoccaceae</taxon>
        <taxon>Rhodovulum</taxon>
    </lineage>
</organism>
<evidence type="ECO:0000250" key="1">
    <source>
        <dbReference type="UniProtKB" id="A0A0J5ZXG5"/>
    </source>
</evidence>
<evidence type="ECO:0000250" key="2">
    <source>
        <dbReference type="UniProtKB" id="P0DV24"/>
    </source>
</evidence>
<evidence type="ECO:0000250" key="3">
    <source>
        <dbReference type="UniProtKB" id="P0DV40"/>
    </source>
</evidence>
<evidence type="ECO:0000255" key="4">
    <source>
        <dbReference type="PROSITE-ProRule" id="PRU00099"/>
    </source>
</evidence>
<evidence type="ECO:0000269" key="5">
    <source>
    </source>
</evidence>
<evidence type="ECO:0000303" key="6">
    <source>
    </source>
</evidence>
<evidence type="ECO:0000303" key="7">
    <source ref="1"/>
</evidence>
<evidence type="ECO:0000305" key="8"/>
<evidence type="ECO:0000305" key="9">
    <source>
    </source>
</evidence>
<protein>
    <recommendedName>
        <fullName evidence="6">Uridylate cyclase</fullName>
        <ecNumber evidence="5">4.6.1.26</ecNumber>
    </recommendedName>
    <alternativeName>
        <fullName>Cyclic UMP synthase</fullName>
        <shortName evidence="6">cUMP synthase</shortName>
    </alternativeName>
    <alternativeName>
        <fullName evidence="6">RsmPycC</fullName>
    </alternativeName>
</protein>
<comment type="function">
    <text evidence="9">Pycsar (pyrimidine cyclase system for antiphage resistance) provides immunity against bacteriophage. The pyrimidine cyclase (PycC) synthesizes cyclic nucleotides in response to infection; these serve as specific second messenger signals. The signals activate the adjacent effector, leading to bacterial cell death and abortive phage infection. A clade B Pycsar system.</text>
</comment>
<comment type="function">
    <text evidence="5 9">The pyrimidine cyclase gene of a two-gene Pycsar system, weakly generates cyclic UMP (cUMP) from UTP, has little to no activity on ATP, CTP or GTP (PubMed:34644530). Expression of this and adjacent effector RsmPycTM (AC A0A1V0HUU2) probably confers resistance to bacteriophage. The genes are probably only expressed in response to bacteriophage infection (Probable).</text>
</comment>
<comment type="catalytic activity">
    <reaction evidence="5">
        <text>UTP = 3',5'-cyclic UMP + diphosphate</text>
        <dbReference type="Rhea" id="RHEA:69603"/>
        <dbReference type="ChEBI" id="CHEBI:33019"/>
        <dbReference type="ChEBI" id="CHEBI:46398"/>
        <dbReference type="ChEBI" id="CHEBI:184387"/>
        <dbReference type="EC" id="4.6.1.26"/>
    </reaction>
</comment>
<comment type="cofactor">
    <cofactor evidence="2">
        <name>Mn(2+)</name>
        <dbReference type="ChEBI" id="CHEBI:29035"/>
    </cofactor>
</comment>
<comment type="subunit">
    <text evidence="1">Homodimer.</text>
</comment>
<comment type="subcellular location">
    <subcellularLocation>
        <location evidence="8">Cytoplasm</location>
    </subcellularLocation>
</comment>
<comment type="similarity">
    <text evidence="9">Belongs to the adenylyl cyclase class-4/guanylyl cyclase family. Pyrimidine cyclase subfamily.</text>
</comment>